<comment type="function">
    <text evidence="1">Two distinct, membrane-bound, FAD-containing enzymes are responsible for the catalysis of fumarate and succinate interconversion; fumarate reductase is used in anaerobic growth, and succinate dehydrogenase is used in aerobic growth. Anchors the catalytic components of the fumarate reductase complex to the cell inner membrane, binds quinones.</text>
</comment>
<comment type="subunit">
    <text evidence="1">Part of an enzyme complex containing four subunits: a flavoprotein (FrdA), an iron-sulfur protein (FrdB), and two hydrophobic anchor proteins (FrdC and FrdD).</text>
</comment>
<comment type="subcellular location">
    <subcellularLocation>
        <location evidence="1">Cell inner membrane</location>
        <topology evidence="1">Multi-pass membrane protein</topology>
    </subcellularLocation>
</comment>
<comment type="similarity">
    <text evidence="1">Belongs to the FrdD family.</text>
</comment>
<proteinExistence type="inferred from homology"/>
<reference key="1">
    <citation type="journal article" date="2001" name="Nature">
        <title>Genome sequence of Yersinia pestis, the causative agent of plague.</title>
        <authorList>
            <person name="Parkhill J."/>
            <person name="Wren B.W."/>
            <person name="Thomson N.R."/>
            <person name="Titball R.W."/>
            <person name="Holden M.T.G."/>
            <person name="Prentice M.B."/>
            <person name="Sebaihia M."/>
            <person name="James K.D."/>
            <person name="Churcher C.M."/>
            <person name="Mungall K.L."/>
            <person name="Baker S."/>
            <person name="Basham D."/>
            <person name="Bentley S.D."/>
            <person name="Brooks K."/>
            <person name="Cerdeno-Tarraga A.-M."/>
            <person name="Chillingworth T."/>
            <person name="Cronin A."/>
            <person name="Davies R.M."/>
            <person name="Davis P."/>
            <person name="Dougan G."/>
            <person name="Feltwell T."/>
            <person name="Hamlin N."/>
            <person name="Holroyd S."/>
            <person name="Jagels K."/>
            <person name="Karlyshev A.V."/>
            <person name="Leather S."/>
            <person name="Moule S."/>
            <person name="Oyston P.C.F."/>
            <person name="Quail M.A."/>
            <person name="Rutherford K.M."/>
            <person name="Simmonds M."/>
            <person name="Skelton J."/>
            <person name="Stevens K."/>
            <person name="Whitehead S."/>
            <person name="Barrell B.G."/>
        </authorList>
    </citation>
    <scope>NUCLEOTIDE SEQUENCE [LARGE SCALE GENOMIC DNA]</scope>
    <source>
        <strain>CO-92 / Biovar Orientalis</strain>
    </source>
</reference>
<reference key="2">
    <citation type="journal article" date="2002" name="J. Bacteriol.">
        <title>Genome sequence of Yersinia pestis KIM.</title>
        <authorList>
            <person name="Deng W."/>
            <person name="Burland V."/>
            <person name="Plunkett G. III"/>
            <person name="Boutin A."/>
            <person name="Mayhew G.F."/>
            <person name="Liss P."/>
            <person name="Perna N.T."/>
            <person name="Rose D.J."/>
            <person name="Mau B."/>
            <person name="Zhou S."/>
            <person name="Schwartz D.C."/>
            <person name="Fetherston J.D."/>
            <person name="Lindler L.E."/>
            <person name="Brubaker R.R."/>
            <person name="Plano G.V."/>
            <person name="Straley S.C."/>
            <person name="McDonough K.A."/>
            <person name="Nilles M.L."/>
            <person name="Matson J.S."/>
            <person name="Blattner F.R."/>
            <person name="Perry R.D."/>
        </authorList>
    </citation>
    <scope>NUCLEOTIDE SEQUENCE [LARGE SCALE GENOMIC DNA]</scope>
    <source>
        <strain>KIM10+ / Biovar Mediaevalis</strain>
    </source>
</reference>
<reference key="3">
    <citation type="journal article" date="2004" name="DNA Res.">
        <title>Complete genome sequence of Yersinia pestis strain 91001, an isolate avirulent to humans.</title>
        <authorList>
            <person name="Song Y."/>
            <person name="Tong Z."/>
            <person name="Wang J."/>
            <person name="Wang L."/>
            <person name="Guo Z."/>
            <person name="Han Y."/>
            <person name="Zhang J."/>
            <person name="Pei D."/>
            <person name="Zhou D."/>
            <person name="Qin H."/>
            <person name="Pang X."/>
            <person name="Han Y."/>
            <person name="Zhai J."/>
            <person name="Li M."/>
            <person name="Cui B."/>
            <person name="Qi Z."/>
            <person name="Jin L."/>
            <person name="Dai R."/>
            <person name="Chen F."/>
            <person name="Li S."/>
            <person name="Ye C."/>
            <person name="Du Z."/>
            <person name="Lin W."/>
            <person name="Wang J."/>
            <person name="Yu J."/>
            <person name="Yang H."/>
            <person name="Wang J."/>
            <person name="Huang P."/>
            <person name="Yang R."/>
        </authorList>
    </citation>
    <scope>NUCLEOTIDE SEQUENCE [LARGE SCALE GENOMIC DNA]</scope>
    <source>
        <strain>91001 / Biovar Mediaevalis</strain>
    </source>
</reference>
<protein>
    <recommendedName>
        <fullName evidence="1">Fumarate reductase subunit D</fullName>
    </recommendedName>
    <alternativeName>
        <fullName evidence="1">Fumarate reductase 13 kDa hydrophobic protein</fullName>
    </alternativeName>
    <alternativeName>
        <fullName evidence="1">Quinol-fumarate reductase subunit D</fullName>
        <shortName evidence="1">QFR subunit D</shortName>
    </alternativeName>
</protein>
<evidence type="ECO:0000255" key="1">
    <source>
        <dbReference type="HAMAP-Rule" id="MF_00709"/>
    </source>
</evidence>
<keyword id="KW-0997">Cell inner membrane</keyword>
<keyword id="KW-1003">Cell membrane</keyword>
<keyword id="KW-0472">Membrane</keyword>
<keyword id="KW-1185">Reference proteome</keyword>
<keyword id="KW-0812">Transmembrane</keyword>
<keyword id="KW-1133">Transmembrane helix</keyword>
<sequence>MNQVPKRSDEPIFWGLFGAGGMWGAIIAPVIILLVAILLPLGAFPGDALSYERILAFCQSFIGRVFLLLMIILPLWCGLHRIHHAMHDLKIHVPAGKWVFYGLAAILSVVTFIGVLTL</sequence>
<name>FRDD_YERPE</name>
<dbReference type="EMBL" id="AL590842">
    <property type="protein sequence ID" value="CAL19039.1"/>
    <property type="molecule type" value="Genomic_DNA"/>
</dbReference>
<dbReference type="EMBL" id="AE009952">
    <property type="protein sequence ID" value="AAM84202.1"/>
    <property type="molecule type" value="Genomic_DNA"/>
</dbReference>
<dbReference type="EMBL" id="AE017042">
    <property type="protein sequence ID" value="AAS60782.1"/>
    <property type="molecule type" value="Genomic_DNA"/>
</dbReference>
<dbReference type="PIR" id="AE0044">
    <property type="entry name" value="AE0044"/>
</dbReference>
<dbReference type="RefSeq" id="WP_002209134.1">
    <property type="nucleotide sequence ID" value="NZ_WUCM01000014.1"/>
</dbReference>
<dbReference type="RefSeq" id="YP_002345435.1">
    <property type="nucleotide sequence ID" value="NC_003143.1"/>
</dbReference>
<dbReference type="SMR" id="Q8ZIX8"/>
<dbReference type="STRING" id="214092.YPO0357"/>
<dbReference type="PaxDb" id="214092-YPO0357"/>
<dbReference type="DNASU" id="1145561"/>
<dbReference type="EnsemblBacteria" id="AAS60782">
    <property type="protein sequence ID" value="AAS60782"/>
    <property type="gene ID" value="YP_0512"/>
</dbReference>
<dbReference type="GeneID" id="57974251"/>
<dbReference type="KEGG" id="ype:YPO0357"/>
<dbReference type="KEGG" id="ypk:y0614"/>
<dbReference type="KEGG" id="ypm:YP_0512"/>
<dbReference type="PATRIC" id="fig|214092.21.peg.593"/>
<dbReference type="eggNOG" id="COG3080">
    <property type="taxonomic scope" value="Bacteria"/>
</dbReference>
<dbReference type="HOGENOM" id="CLU_168367_0_0_6"/>
<dbReference type="OMA" id="ACYAFAG"/>
<dbReference type="OrthoDB" id="9804636at2"/>
<dbReference type="Proteomes" id="UP000000815">
    <property type="component" value="Chromosome"/>
</dbReference>
<dbReference type="Proteomes" id="UP000001019">
    <property type="component" value="Chromosome"/>
</dbReference>
<dbReference type="Proteomes" id="UP000002490">
    <property type="component" value="Chromosome"/>
</dbReference>
<dbReference type="GO" id="GO:0045283">
    <property type="term" value="C:fumarate reductase complex"/>
    <property type="evidence" value="ECO:0007669"/>
    <property type="project" value="UniProtKB-UniRule"/>
</dbReference>
<dbReference type="GO" id="GO:0005886">
    <property type="term" value="C:plasma membrane"/>
    <property type="evidence" value="ECO:0007669"/>
    <property type="project" value="UniProtKB-SubCell"/>
</dbReference>
<dbReference type="GO" id="GO:0000104">
    <property type="term" value="F:succinate dehydrogenase activity"/>
    <property type="evidence" value="ECO:0007669"/>
    <property type="project" value="UniProtKB-UniRule"/>
</dbReference>
<dbReference type="GO" id="GO:0006106">
    <property type="term" value="P:fumarate metabolic process"/>
    <property type="evidence" value="ECO:0007669"/>
    <property type="project" value="InterPro"/>
</dbReference>
<dbReference type="CDD" id="cd00547">
    <property type="entry name" value="QFR_TypeD_subunitD"/>
    <property type="match status" value="1"/>
</dbReference>
<dbReference type="FunFam" id="1.20.1300.10:FF:000002">
    <property type="entry name" value="Fumarate reductase subunit D"/>
    <property type="match status" value="1"/>
</dbReference>
<dbReference type="Gene3D" id="1.20.1300.10">
    <property type="entry name" value="Fumarate reductase/succinate dehydrogenase, transmembrane subunit"/>
    <property type="match status" value="1"/>
</dbReference>
<dbReference type="HAMAP" id="MF_00709">
    <property type="entry name" value="Fumarate_red_D"/>
    <property type="match status" value="1"/>
</dbReference>
<dbReference type="InterPro" id="IPR003418">
    <property type="entry name" value="Fumarate_red_D"/>
</dbReference>
<dbReference type="InterPro" id="IPR034804">
    <property type="entry name" value="SQR/QFR_C/D"/>
</dbReference>
<dbReference type="NCBIfam" id="NF003977">
    <property type="entry name" value="PRK05470.1-1"/>
    <property type="match status" value="1"/>
</dbReference>
<dbReference type="Pfam" id="PF02313">
    <property type="entry name" value="Fumarate_red_D"/>
    <property type="match status" value="1"/>
</dbReference>
<dbReference type="PIRSF" id="PIRSF000179">
    <property type="entry name" value="FrdD"/>
    <property type="match status" value="1"/>
</dbReference>
<dbReference type="SUPFAM" id="SSF81343">
    <property type="entry name" value="Fumarate reductase respiratory complex transmembrane subunits"/>
    <property type="match status" value="1"/>
</dbReference>
<gene>
    <name evidence="1" type="primary">frdD</name>
    <name type="ordered locus">YPO0357</name>
    <name type="ordered locus">y0614</name>
    <name type="ordered locus">YP_0512</name>
</gene>
<organism>
    <name type="scientific">Yersinia pestis</name>
    <dbReference type="NCBI Taxonomy" id="632"/>
    <lineage>
        <taxon>Bacteria</taxon>
        <taxon>Pseudomonadati</taxon>
        <taxon>Pseudomonadota</taxon>
        <taxon>Gammaproteobacteria</taxon>
        <taxon>Enterobacterales</taxon>
        <taxon>Yersiniaceae</taxon>
        <taxon>Yersinia</taxon>
    </lineage>
</organism>
<accession>Q8ZIX8</accession>
<accession>Q0WJV3</accession>
<feature type="chain" id="PRO_0000196558" description="Fumarate reductase subunit D">
    <location>
        <begin position="1"/>
        <end position="118"/>
    </location>
</feature>
<feature type="transmembrane region" description="Helical" evidence="1">
    <location>
        <begin position="24"/>
        <end position="44"/>
    </location>
</feature>
<feature type="transmembrane region" description="Helical" evidence="1">
    <location>
        <begin position="54"/>
        <end position="74"/>
    </location>
</feature>
<feature type="transmembrane region" description="Helical" evidence="1">
    <location>
        <begin position="98"/>
        <end position="118"/>
    </location>
</feature>